<evidence type="ECO:0000255" key="1">
    <source>
        <dbReference type="HAMAP-Rule" id="MF_01008"/>
    </source>
</evidence>
<evidence type="ECO:0000255" key="2">
    <source>
        <dbReference type="PROSITE-ProRule" id="PRU01076"/>
    </source>
</evidence>
<comment type="subunit">
    <text evidence="1">Forms oligomers.</text>
</comment>
<comment type="subcellular location">
    <subcellularLocation>
        <location evidence="1">Cytoplasm</location>
        <location evidence="1">Nucleoid</location>
    </subcellularLocation>
</comment>
<comment type="similarity">
    <text evidence="1">Belongs to the MraZ family.</text>
</comment>
<protein>
    <recommendedName>
        <fullName>Transcriptional regulator MraZ</fullName>
    </recommendedName>
</protein>
<name>MRAZ_MYCS2</name>
<reference key="1">
    <citation type="submission" date="2006-10" db="EMBL/GenBank/DDBJ databases">
        <authorList>
            <person name="Fleischmann R.D."/>
            <person name="Dodson R.J."/>
            <person name="Haft D.H."/>
            <person name="Merkel J.S."/>
            <person name="Nelson W.C."/>
            <person name="Fraser C.M."/>
        </authorList>
    </citation>
    <scope>NUCLEOTIDE SEQUENCE [LARGE SCALE GENOMIC DNA]</scope>
    <source>
        <strain>ATCC 700084 / mc(2)155</strain>
    </source>
</reference>
<reference key="2">
    <citation type="journal article" date="2007" name="Genome Biol.">
        <title>Interrupted coding sequences in Mycobacterium smegmatis: authentic mutations or sequencing errors?</title>
        <authorList>
            <person name="Deshayes C."/>
            <person name="Perrodou E."/>
            <person name="Gallien S."/>
            <person name="Euphrasie D."/>
            <person name="Schaeffer C."/>
            <person name="Van-Dorsselaer A."/>
            <person name="Poch O."/>
            <person name="Lecompte O."/>
            <person name="Reyrat J.-M."/>
        </authorList>
    </citation>
    <scope>NUCLEOTIDE SEQUENCE [LARGE SCALE GENOMIC DNA]</scope>
    <source>
        <strain>ATCC 700084 / mc(2)155</strain>
    </source>
</reference>
<reference key="3">
    <citation type="journal article" date="2009" name="Genome Res.">
        <title>Ortho-proteogenomics: multiple proteomes investigation through orthology and a new MS-based protocol.</title>
        <authorList>
            <person name="Gallien S."/>
            <person name="Perrodou E."/>
            <person name="Carapito C."/>
            <person name="Deshayes C."/>
            <person name="Reyrat J.-M."/>
            <person name="Van Dorsselaer A."/>
            <person name="Poch O."/>
            <person name="Schaeffer C."/>
            <person name="Lecompte O."/>
        </authorList>
    </citation>
    <scope>NUCLEOTIDE SEQUENCE [LARGE SCALE GENOMIC DNA]</scope>
    <scope>IDENTIFICATION BY MASS SPECTROMETRY [LARGE SCALE ANALYSIS]</scope>
    <source>
        <strain>ATCC 700084 / mc(2)155</strain>
    </source>
</reference>
<keyword id="KW-0963">Cytoplasm</keyword>
<keyword id="KW-0238">DNA-binding</keyword>
<keyword id="KW-1185">Reference proteome</keyword>
<keyword id="KW-0677">Repeat</keyword>
<keyword id="KW-0804">Transcription</keyword>
<keyword id="KW-0805">Transcription regulation</keyword>
<proteinExistence type="evidence at protein level"/>
<dbReference type="EMBL" id="CP000480">
    <property type="protein sequence ID" value="ABK71397.1"/>
    <property type="molecule type" value="Genomic_DNA"/>
</dbReference>
<dbReference type="EMBL" id="CP001663">
    <property type="protein sequence ID" value="AFP40593.1"/>
    <property type="molecule type" value="Genomic_DNA"/>
</dbReference>
<dbReference type="RefSeq" id="WP_011729664.1">
    <property type="nucleotide sequence ID" value="NZ_SIJM01000003.1"/>
</dbReference>
<dbReference type="RefSeq" id="YP_888513.1">
    <property type="nucleotide sequence ID" value="NC_008596.1"/>
</dbReference>
<dbReference type="SMR" id="A0R025"/>
<dbReference type="STRING" id="246196.MSMEG_4236"/>
<dbReference type="PaxDb" id="246196-MSMEI_4136"/>
<dbReference type="GeneID" id="93458954"/>
<dbReference type="KEGG" id="msb:LJ00_21000"/>
<dbReference type="KEGG" id="msg:MSMEI_4136"/>
<dbReference type="KEGG" id="msm:MSMEG_4236"/>
<dbReference type="PATRIC" id="fig|246196.19.peg.4156"/>
<dbReference type="eggNOG" id="COG2001">
    <property type="taxonomic scope" value="Bacteria"/>
</dbReference>
<dbReference type="OrthoDB" id="9807753at2"/>
<dbReference type="Proteomes" id="UP000000757">
    <property type="component" value="Chromosome"/>
</dbReference>
<dbReference type="Proteomes" id="UP000006158">
    <property type="component" value="Chromosome"/>
</dbReference>
<dbReference type="GO" id="GO:0005737">
    <property type="term" value="C:cytoplasm"/>
    <property type="evidence" value="ECO:0007669"/>
    <property type="project" value="UniProtKB-UniRule"/>
</dbReference>
<dbReference type="GO" id="GO:0009295">
    <property type="term" value="C:nucleoid"/>
    <property type="evidence" value="ECO:0007669"/>
    <property type="project" value="UniProtKB-SubCell"/>
</dbReference>
<dbReference type="GO" id="GO:0003700">
    <property type="term" value="F:DNA-binding transcription factor activity"/>
    <property type="evidence" value="ECO:0007669"/>
    <property type="project" value="UniProtKB-UniRule"/>
</dbReference>
<dbReference type="GO" id="GO:0000976">
    <property type="term" value="F:transcription cis-regulatory region binding"/>
    <property type="evidence" value="ECO:0007669"/>
    <property type="project" value="TreeGrafter"/>
</dbReference>
<dbReference type="GO" id="GO:2000143">
    <property type="term" value="P:negative regulation of DNA-templated transcription initiation"/>
    <property type="evidence" value="ECO:0007669"/>
    <property type="project" value="TreeGrafter"/>
</dbReference>
<dbReference type="CDD" id="cd16321">
    <property type="entry name" value="MraZ_C"/>
    <property type="match status" value="1"/>
</dbReference>
<dbReference type="CDD" id="cd16320">
    <property type="entry name" value="MraZ_N"/>
    <property type="match status" value="1"/>
</dbReference>
<dbReference type="Gene3D" id="3.40.1550.20">
    <property type="entry name" value="Transcriptional regulator MraZ domain"/>
    <property type="match status" value="1"/>
</dbReference>
<dbReference type="HAMAP" id="MF_01008">
    <property type="entry name" value="MraZ"/>
    <property type="match status" value="1"/>
</dbReference>
<dbReference type="InterPro" id="IPR003444">
    <property type="entry name" value="MraZ"/>
</dbReference>
<dbReference type="InterPro" id="IPR035644">
    <property type="entry name" value="MraZ_C"/>
</dbReference>
<dbReference type="InterPro" id="IPR020603">
    <property type="entry name" value="MraZ_dom"/>
</dbReference>
<dbReference type="InterPro" id="IPR035642">
    <property type="entry name" value="MraZ_N"/>
</dbReference>
<dbReference type="InterPro" id="IPR038619">
    <property type="entry name" value="MraZ_sf"/>
</dbReference>
<dbReference type="InterPro" id="IPR007159">
    <property type="entry name" value="SpoVT-AbrB_dom"/>
</dbReference>
<dbReference type="InterPro" id="IPR037914">
    <property type="entry name" value="SpoVT-AbrB_sf"/>
</dbReference>
<dbReference type="NCBIfam" id="TIGR00242">
    <property type="entry name" value="division/cell wall cluster transcriptional repressor MraZ"/>
    <property type="match status" value="1"/>
</dbReference>
<dbReference type="PANTHER" id="PTHR34701">
    <property type="entry name" value="TRANSCRIPTIONAL REGULATOR MRAZ"/>
    <property type="match status" value="1"/>
</dbReference>
<dbReference type="PANTHER" id="PTHR34701:SF1">
    <property type="entry name" value="TRANSCRIPTIONAL REGULATOR MRAZ"/>
    <property type="match status" value="1"/>
</dbReference>
<dbReference type="Pfam" id="PF02381">
    <property type="entry name" value="MraZ"/>
    <property type="match status" value="2"/>
</dbReference>
<dbReference type="SUPFAM" id="SSF89447">
    <property type="entry name" value="AbrB/MazE/MraZ-like"/>
    <property type="match status" value="1"/>
</dbReference>
<dbReference type="PROSITE" id="PS51740">
    <property type="entry name" value="SPOVT_ABRB"/>
    <property type="match status" value="2"/>
</dbReference>
<sequence length="143" mass="16100">MFLGTYTPKLDDKGRLTLPAKFRDALAGGLMVTKSQDHSLAVYPRDEFEKLARRASQASRSNPEARAFLRSLAAATDEQHPDAQGRITLSADHRRYANLSKDCVVIGSVDYLEIWDAQAWQEYQQAHEENFSAATDETLRDII</sequence>
<feature type="chain" id="PRO_1000062898" description="Transcriptional regulator MraZ">
    <location>
        <begin position="1"/>
        <end position="143"/>
    </location>
</feature>
<feature type="domain" description="SpoVT-AbrB 1" evidence="2">
    <location>
        <begin position="5"/>
        <end position="47"/>
    </location>
</feature>
<feature type="domain" description="SpoVT-AbrB 2" evidence="2">
    <location>
        <begin position="76"/>
        <end position="119"/>
    </location>
</feature>
<accession>A0R025</accession>
<accession>I7FPE9</accession>
<organism>
    <name type="scientific">Mycolicibacterium smegmatis (strain ATCC 700084 / mc(2)155)</name>
    <name type="common">Mycobacterium smegmatis</name>
    <dbReference type="NCBI Taxonomy" id="246196"/>
    <lineage>
        <taxon>Bacteria</taxon>
        <taxon>Bacillati</taxon>
        <taxon>Actinomycetota</taxon>
        <taxon>Actinomycetes</taxon>
        <taxon>Mycobacteriales</taxon>
        <taxon>Mycobacteriaceae</taxon>
        <taxon>Mycolicibacterium</taxon>
    </lineage>
</organism>
<gene>
    <name evidence="1" type="primary">mraZ</name>
    <name type="ordered locus">MSMEG_4236</name>
    <name type="ordered locus">MSMEI_4136</name>
</gene>